<reference key="1">
    <citation type="journal article" date="2005" name="Nucleic Acids Res.">
        <title>The genome sequence of Salmonella enterica serovar Choleraesuis, a highly invasive and resistant zoonotic pathogen.</title>
        <authorList>
            <person name="Chiu C.-H."/>
            <person name="Tang P."/>
            <person name="Chu C."/>
            <person name="Hu S."/>
            <person name="Bao Q."/>
            <person name="Yu J."/>
            <person name="Chou Y.-Y."/>
            <person name="Wang H.-S."/>
            <person name="Lee Y.-S."/>
        </authorList>
    </citation>
    <scope>NUCLEOTIDE SEQUENCE [LARGE SCALE GENOMIC DNA]</scope>
    <source>
        <strain>SC-B67</strain>
    </source>
</reference>
<gene>
    <name evidence="1" type="primary">patA</name>
    <name type="ordered locus">SCH_3165</name>
</gene>
<comment type="function">
    <text evidence="1">Catalyzes the aminotransferase reaction from putrescine to 2-oxoglutarate, leading to glutamate and 4-aminobutanal, which spontaneously cyclizes to form 1-pyrroline. This is the first step in one of two pathways for putrescine degradation, where putrescine is converted into 4-aminobutanoate (gamma-aminobutyrate or GABA) via 4-aminobutanal. Also functions as a cadaverine transaminase in a a L-lysine degradation pathway to succinate that proceeds via cadaverine, glutarate and L-2-hydroxyglutarate.</text>
</comment>
<comment type="catalytic activity">
    <reaction evidence="1">
        <text>an alkane-alpha,omega-diamine + 2-oxoglutarate = an omega-aminoaldehyde + L-glutamate</text>
        <dbReference type="Rhea" id="RHEA:18217"/>
        <dbReference type="Rhea" id="RHEA-COMP:9766"/>
        <dbReference type="Rhea" id="RHEA-COMP:12750"/>
        <dbReference type="ChEBI" id="CHEBI:16810"/>
        <dbReference type="ChEBI" id="CHEBI:29985"/>
        <dbReference type="ChEBI" id="CHEBI:70977"/>
        <dbReference type="ChEBI" id="CHEBI:133427"/>
        <dbReference type="EC" id="2.6.1.29"/>
    </reaction>
    <physiologicalReaction direction="left-to-right" evidence="1">
        <dbReference type="Rhea" id="RHEA:18218"/>
    </physiologicalReaction>
</comment>
<comment type="catalytic activity">
    <reaction evidence="1">
        <text>putrescine + 2-oxoglutarate = 1-pyrroline + L-glutamate + H2O</text>
        <dbReference type="Rhea" id="RHEA:12268"/>
        <dbReference type="ChEBI" id="CHEBI:15377"/>
        <dbReference type="ChEBI" id="CHEBI:16810"/>
        <dbReference type="ChEBI" id="CHEBI:29985"/>
        <dbReference type="ChEBI" id="CHEBI:36781"/>
        <dbReference type="ChEBI" id="CHEBI:326268"/>
        <dbReference type="EC" id="2.6.1.82"/>
    </reaction>
    <physiologicalReaction direction="left-to-right" evidence="1">
        <dbReference type="Rhea" id="RHEA:12269"/>
    </physiologicalReaction>
</comment>
<comment type="catalytic activity">
    <reaction evidence="1">
        <text>cadaverine + 2-oxoglutarate = 5-aminopentanal + L-glutamate</text>
        <dbReference type="Rhea" id="RHEA:61624"/>
        <dbReference type="ChEBI" id="CHEBI:16810"/>
        <dbReference type="ChEBI" id="CHEBI:29985"/>
        <dbReference type="ChEBI" id="CHEBI:58384"/>
        <dbReference type="ChEBI" id="CHEBI:144896"/>
    </reaction>
    <physiologicalReaction direction="left-to-right" evidence="1">
        <dbReference type="Rhea" id="RHEA:61625"/>
    </physiologicalReaction>
</comment>
<comment type="cofactor">
    <cofactor evidence="1">
        <name>pyridoxal 5'-phosphate</name>
        <dbReference type="ChEBI" id="CHEBI:597326"/>
    </cofactor>
</comment>
<comment type="pathway">
    <text evidence="1">Amine and polyamine degradation; putrescine degradation; 4-aminobutanal from putrescine (transaminase route): step 1/1.</text>
</comment>
<comment type="similarity">
    <text evidence="1">Belongs to the class-III pyridoxal-phosphate-dependent aminotransferase family. Putrescine aminotransferase subfamily.</text>
</comment>
<sequence>MNRLPSSASALACSAHALNLIEKRTLNHEEMKALNREVIDYFKEHVNPGFLEYRKSVTAGGDYGAVEWQAGSLNTLVDTQGQEFIDCLGGFGIFNVGHRNPVVVSAVQNQLAKQPLHSQELLDPLRAMLAKTLAALTPGKLKYSFFCNSGTESVEAALKLAKAYQSPRGKFTFIATSGAFHGKSLGALSATAKSIFRRPFMPLLPGFRHVPFGNIDAMSMAFSEGKKTGDEIAAVILEPIQGEGGVILPPQGYLTEVRKLCDEFGALMILDEVQTGMGRTGKMFACEHENVQPDILCLAKALGGGVMPIGATIATEEVFSVLFDNPFLHTTTFGGNPLACAAALATINVLLEQNLPAQAEQKGDTLLDGFRQLAREYPNLVHDARGKGMLMAIEFVDNETGYRFASEMFRQRVLVAGTLNNAKTIRIEPPLTLTIELCEQVLKSARNALAAMQVSVEEV</sequence>
<keyword id="KW-0032">Aminotransferase</keyword>
<keyword id="KW-0663">Pyridoxal phosphate</keyword>
<keyword id="KW-0808">Transferase</keyword>
<protein>
    <recommendedName>
        <fullName evidence="1">Putrescine aminotransferase</fullName>
        <shortName evidence="1">PAT</shortName>
        <shortName evidence="1">PATase</shortName>
        <ecNumber evidence="1">2.6.1.82</ecNumber>
    </recommendedName>
    <alternativeName>
        <fullName evidence="1">Cadaverine transaminase</fullName>
    </alternativeName>
    <alternativeName>
        <fullName evidence="1">Diamine transaminase</fullName>
        <ecNumber evidence="1">2.6.1.29</ecNumber>
    </alternativeName>
    <alternativeName>
        <fullName evidence="1">Putrescine transaminase</fullName>
    </alternativeName>
    <alternativeName>
        <fullName evidence="1">Putrescine--2-oxoglutaric acid transaminase</fullName>
    </alternativeName>
</protein>
<organism>
    <name type="scientific">Salmonella choleraesuis (strain SC-B67)</name>
    <dbReference type="NCBI Taxonomy" id="321314"/>
    <lineage>
        <taxon>Bacteria</taxon>
        <taxon>Pseudomonadati</taxon>
        <taxon>Pseudomonadota</taxon>
        <taxon>Gammaproteobacteria</taxon>
        <taxon>Enterobacterales</taxon>
        <taxon>Enterobacteriaceae</taxon>
        <taxon>Salmonella</taxon>
    </lineage>
</organism>
<evidence type="ECO:0000255" key="1">
    <source>
        <dbReference type="HAMAP-Rule" id="MF_01276"/>
    </source>
</evidence>
<feature type="chain" id="PRO_0000269733" description="Putrescine aminotransferase">
    <location>
        <begin position="1"/>
        <end position="459"/>
    </location>
</feature>
<feature type="binding site" description="in other chain" evidence="1">
    <location>
        <begin position="150"/>
        <end position="151"/>
    </location>
    <ligand>
        <name>pyridoxal 5'-phosphate</name>
        <dbReference type="ChEBI" id="CHEBI:597326"/>
        <note>ligand shared between dimeric partners</note>
    </ligand>
</feature>
<feature type="binding site" description="in other chain" evidence="1">
    <location>
        <position position="274"/>
    </location>
    <ligand>
        <name>pyridoxal 5'-phosphate</name>
        <dbReference type="ChEBI" id="CHEBI:597326"/>
        <note>ligand shared between dimeric partners</note>
    </ligand>
</feature>
<feature type="binding site" evidence="1">
    <location>
        <position position="332"/>
    </location>
    <ligand>
        <name>pyridoxal 5'-phosphate</name>
        <dbReference type="ChEBI" id="CHEBI:597326"/>
        <note>ligand shared between dimeric partners</note>
    </ligand>
</feature>
<feature type="modified residue" description="N6-(pyridoxal phosphate)lysine" evidence="1">
    <location>
        <position position="300"/>
    </location>
</feature>
<dbReference type="EC" id="2.6.1.82" evidence="1"/>
<dbReference type="EC" id="2.6.1.29" evidence="1"/>
<dbReference type="EMBL" id="AE017220">
    <property type="protein sequence ID" value="AAX67071.1"/>
    <property type="molecule type" value="Genomic_DNA"/>
</dbReference>
<dbReference type="SMR" id="Q57JP1"/>
<dbReference type="KEGG" id="sec:SCH_3165"/>
<dbReference type="HOGENOM" id="CLU_016922_10_0_6"/>
<dbReference type="UniPathway" id="UPA00188">
    <property type="reaction ID" value="UER00290"/>
</dbReference>
<dbReference type="Proteomes" id="UP000000538">
    <property type="component" value="Chromosome"/>
</dbReference>
<dbReference type="GO" id="GO:0019161">
    <property type="term" value="F:diamine transaminase activity"/>
    <property type="evidence" value="ECO:0007669"/>
    <property type="project" value="UniProtKB-EC"/>
</dbReference>
<dbReference type="GO" id="GO:0042802">
    <property type="term" value="F:identical protein binding"/>
    <property type="evidence" value="ECO:0007669"/>
    <property type="project" value="TreeGrafter"/>
</dbReference>
<dbReference type="GO" id="GO:0033094">
    <property type="term" value="F:putrescine--2-oxoglutarate transaminase activity"/>
    <property type="evidence" value="ECO:0007669"/>
    <property type="project" value="UniProtKB-UniRule"/>
</dbReference>
<dbReference type="GO" id="GO:0030170">
    <property type="term" value="F:pyridoxal phosphate binding"/>
    <property type="evidence" value="ECO:0007669"/>
    <property type="project" value="UniProtKB-UniRule"/>
</dbReference>
<dbReference type="GO" id="GO:0019477">
    <property type="term" value="P:L-lysine catabolic process"/>
    <property type="evidence" value="ECO:0007669"/>
    <property type="project" value="UniProtKB-UniRule"/>
</dbReference>
<dbReference type="GO" id="GO:0009447">
    <property type="term" value="P:putrescine catabolic process"/>
    <property type="evidence" value="ECO:0007669"/>
    <property type="project" value="UniProtKB-UniRule"/>
</dbReference>
<dbReference type="CDD" id="cd00610">
    <property type="entry name" value="OAT_like"/>
    <property type="match status" value="1"/>
</dbReference>
<dbReference type="FunFam" id="3.40.640.10:FF:000004">
    <property type="entry name" value="Acetylornithine aminotransferase"/>
    <property type="match status" value="1"/>
</dbReference>
<dbReference type="Gene3D" id="3.90.1150.10">
    <property type="entry name" value="Aspartate Aminotransferase, domain 1"/>
    <property type="match status" value="1"/>
</dbReference>
<dbReference type="Gene3D" id="3.40.640.10">
    <property type="entry name" value="Type I PLP-dependent aspartate aminotransferase-like (Major domain)"/>
    <property type="match status" value="1"/>
</dbReference>
<dbReference type="HAMAP" id="MF_01276">
    <property type="entry name" value="Putres_aminotrans_3"/>
    <property type="match status" value="1"/>
</dbReference>
<dbReference type="InterPro" id="IPR005814">
    <property type="entry name" value="Aminotrans_3"/>
</dbReference>
<dbReference type="InterPro" id="IPR049704">
    <property type="entry name" value="Aminotrans_3_PPA_site"/>
</dbReference>
<dbReference type="InterPro" id="IPR050103">
    <property type="entry name" value="Class-III_PLP-dep_AT"/>
</dbReference>
<dbReference type="InterPro" id="IPR017747">
    <property type="entry name" value="Putrescine_aminotransferase"/>
</dbReference>
<dbReference type="InterPro" id="IPR015424">
    <property type="entry name" value="PyrdxlP-dep_Trfase"/>
</dbReference>
<dbReference type="InterPro" id="IPR015421">
    <property type="entry name" value="PyrdxlP-dep_Trfase_major"/>
</dbReference>
<dbReference type="InterPro" id="IPR015422">
    <property type="entry name" value="PyrdxlP-dep_Trfase_small"/>
</dbReference>
<dbReference type="NCBIfam" id="NF008570">
    <property type="entry name" value="PRK11522.1"/>
    <property type="match status" value="1"/>
</dbReference>
<dbReference type="NCBIfam" id="TIGR03372">
    <property type="entry name" value="putres_am_tran"/>
    <property type="match status" value="1"/>
</dbReference>
<dbReference type="PANTHER" id="PTHR11986">
    <property type="entry name" value="AMINOTRANSFERASE CLASS III"/>
    <property type="match status" value="1"/>
</dbReference>
<dbReference type="PANTHER" id="PTHR11986:SF112">
    <property type="entry name" value="PUTRESCINE AMINOTRANSFERASE"/>
    <property type="match status" value="1"/>
</dbReference>
<dbReference type="Pfam" id="PF00202">
    <property type="entry name" value="Aminotran_3"/>
    <property type="match status" value="1"/>
</dbReference>
<dbReference type="PIRSF" id="PIRSF000521">
    <property type="entry name" value="Transaminase_4ab_Lys_Orn"/>
    <property type="match status" value="1"/>
</dbReference>
<dbReference type="SUPFAM" id="SSF53383">
    <property type="entry name" value="PLP-dependent transferases"/>
    <property type="match status" value="1"/>
</dbReference>
<dbReference type="PROSITE" id="PS00600">
    <property type="entry name" value="AA_TRANSFER_CLASS_3"/>
    <property type="match status" value="1"/>
</dbReference>
<name>PAT_SALCH</name>
<proteinExistence type="inferred from homology"/>
<accession>Q57JP1</accession>